<gene>
    <name evidence="1" type="primary">rpsC</name>
</gene>
<keyword id="KW-0687">Ribonucleoprotein</keyword>
<keyword id="KW-0689">Ribosomal protein</keyword>
<keyword id="KW-0694">RNA-binding</keyword>
<keyword id="KW-0699">rRNA-binding</keyword>
<feature type="chain" id="PRO_0000130088" description="Small ribosomal subunit protein uS3">
    <location>
        <begin position="1" status="less than"/>
        <end position="205"/>
    </location>
</feature>
<feature type="domain" description="KH type-2" evidence="1">
    <location>
        <begin position="12"/>
        <end position="80"/>
    </location>
</feature>
<feature type="non-terminal residue">
    <location>
        <position position="1"/>
    </location>
</feature>
<dbReference type="EMBL" id="D31786">
    <property type="protein sequence ID" value="BAA06581.1"/>
    <property type="molecule type" value="Genomic_DNA"/>
</dbReference>
<dbReference type="PIR" id="PC2191">
    <property type="entry name" value="PC2191"/>
</dbReference>
<dbReference type="SMR" id="P46172"/>
<dbReference type="GO" id="GO:0022627">
    <property type="term" value="C:cytosolic small ribosomal subunit"/>
    <property type="evidence" value="ECO:0007669"/>
    <property type="project" value="TreeGrafter"/>
</dbReference>
<dbReference type="GO" id="GO:0019843">
    <property type="term" value="F:rRNA binding"/>
    <property type="evidence" value="ECO:0007669"/>
    <property type="project" value="UniProtKB-KW"/>
</dbReference>
<dbReference type="GO" id="GO:0003735">
    <property type="term" value="F:structural constituent of ribosome"/>
    <property type="evidence" value="ECO:0007669"/>
    <property type="project" value="InterPro"/>
</dbReference>
<dbReference type="GO" id="GO:0006412">
    <property type="term" value="P:translation"/>
    <property type="evidence" value="ECO:0007669"/>
    <property type="project" value="InterPro"/>
</dbReference>
<dbReference type="CDD" id="cd02412">
    <property type="entry name" value="KH-II_30S_S3"/>
    <property type="match status" value="1"/>
</dbReference>
<dbReference type="FunFam" id="3.30.1140.32:FF:000001">
    <property type="entry name" value="30S ribosomal protein S3"/>
    <property type="match status" value="1"/>
</dbReference>
<dbReference type="FunFam" id="3.30.300.20:FF:000001">
    <property type="entry name" value="30S ribosomal protein S3"/>
    <property type="match status" value="1"/>
</dbReference>
<dbReference type="Gene3D" id="3.30.300.20">
    <property type="match status" value="1"/>
</dbReference>
<dbReference type="Gene3D" id="3.30.1140.32">
    <property type="entry name" value="Ribosomal protein S3, C-terminal domain"/>
    <property type="match status" value="1"/>
</dbReference>
<dbReference type="HAMAP" id="MF_01309_B">
    <property type="entry name" value="Ribosomal_uS3_B"/>
    <property type="match status" value="1"/>
</dbReference>
<dbReference type="InterPro" id="IPR004087">
    <property type="entry name" value="KH_dom"/>
</dbReference>
<dbReference type="InterPro" id="IPR015946">
    <property type="entry name" value="KH_dom-like_a/b"/>
</dbReference>
<dbReference type="InterPro" id="IPR004044">
    <property type="entry name" value="KH_dom_type_2"/>
</dbReference>
<dbReference type="InterPro" id="IPR009019">
    <property type="entry name" value="KH_sf_prok-type"/>
</dbReference>
<dbReference type="InterPro" id="IPR036419">
    <property type="entry name" value="Ribosomal_S3_C_sf"/>
</dbReference>
<dbReference type="InterPro" id="IPR005704">
    <property type="entry name" value="Ribosomal_uS3_bac-typ"/>
</dbReference>
<dbReference type="InterPro" id="IPR001351">
    <property type="entry name" value="Ribosomal_uS3_C"/>
</dbReference>
<dbReference type="InterPro" id="IPR018280">
    <property type="entry name" value="Ribosomal_uS3_CS"/>
</dbReference>
<dbReference type="NCBIfam" id="TIGR01009">
    <property type="entry name" value="rpsC_bact"/>
    <property type="match status" value="1"/>
</dbReference>
<dbReference type="PANTHER" id="PTHR11760">
    <property type="entry name" value="30S/40S RIBOSOMAL PROTEIN S3"/>
    <property type="match status" value="1"/>
</dbReference>
<dbReference type="PANTHER" id="PTHR11760:SF19">
    <property type="entry name" value="SMALL RIBOSOMAL SUBUNIT PROTEIN US3C"/>
    <property type="match status" value="1"/>
</dbReference>
<dbReference type="Pfam" id="PF07650">
    <property type="entry name" value="KH_2"/>
    <property type="match status" value="1"/>
</dbReference>
<dbReference type="Pfam" id="PF00189">
    <property type="entry name" value="Ribosomal_S3_C"/>
    <property type="match status" value="1"/>
</dbReference>
<dbReference type="SMART" id="SM00322">
    <property type="entry name" value="KH"/>
    <property type="match status" value="1"/>
</dbReference>
<dbReference type="SUPFAM" id="SSF54814">
    <property type="entry name" value="Prokaryotic type KH domain (KH-domain type II)"/>
    <property type="match status" value="1"/>
</dbReference>
<dbReference type="SUPFAM" id="SSF54821">
    <property type="entry name" value="Ribosomal protein S3 C-terminal domain"/>
    <property type="match status" value="1"/>
</dbReference>
<dbReference type="PROSITE" id="PS50823">
    <property type="entry name" value="KH_TYPE_2"/>
    <property type="match status" value="1"/>
</dbReference>
<dbReference type="PROSITE" id="PS00548">
    <property type="entry name" value="RIBOSOMAL_S3"/>
    <property type="match status" value="1"/>
</dbReference>
<accession>P46172</accession>
<sequence length="205" mass="22732">EFADNLDSDFKVRQFLAKELAKASVSRIVIERPAKSIRVTIHTARPGIVIGKKGEDVEKLRKVVADIAGVPAQINIAEVRKPELDAKLVADSITSQLERRVMFRRAMKRAVQNAMRLGAKGIKVDVSGRLGGAEIARTEWYREGRVPLHTLRADIDYNTSEAHTTYGVIGVKVWIFKGEILGGMAAVEQPEPAAQPKKQQRKGRK</sequence>
<protein>
    <recommendedName>
        <fullName evidence="1">Small ribosomal subunit protein uS3</fullName>
    </recommendedName>
    <alternativeName>
        <fullName evidence="2">30S ribosomal protein S3</fullName>
    </alternativeName>
</protein>
<organism>
    <name type="scientific">Buchnera aphidicola subsp. Acyrthosiphon kondoi</name>
    <name type="common">Acyrthosiphon kondoi symbiotic bacterium</name>
    <dbReference type="NCBI Taxonomy" id="42474"/>
    <lineage>
        <taxon>Bacteria</taxon>
        <taxon>Pseudomonadati</taxon>
        <taxon>Pseudomonadota</taxon>
        <taxon>Gammaproteobacteria</taxon>
        <taxon>Enterobacterales</taxon>
        <taxon>Erwiniaceae</taxon>
        <taxon>Buchnera</taxon>
    </lineage>
</organism>
<evidence type="ECO:0000255" key="1">
    <source>
        <dbReference type="HAMAP-Rule" id="MF_01309"/>
    </source>
</evidence>
<evidence type="ECO:0000305" key="2"/>
<proteinExistence type="inferred from homology"/>
<comment type="function">
    <text evidence="1">Binds the lower part of the 30S subunit head. Binds mRNA in the 70S ribosome, positioning it for translation.</text>
</comment>
<comment type="subunit">
    <text evidence="1">Part of the 30S ribosomal subunit. Forms a tight complex with proteins S10 and S14.</text>
</comment>
<comment type="similarity">
    <text evidence="1">Belongs to the universal ribosomal protein uS3 family.</text>
</comment>
<reference key="1">
    <citation type="journal article" date="1994" name="DNA Res.">
        <title>Cloning and characterization of the ribosomal protein genes in the spc operon of a prokaryotic endosymbiont of the pea aphid, Acyrthosiphon kondoi.</title>
        <authorList>
            <person name="Abe R."/>
            <person name="Yamashita A."/>
            <person name="Isono K."/>
        </authorList>
    </citation>
    <scope>NUCLEOTIDE SEQUENCE [GENOMIC DNA]</scope>
    <source>
        <strain>Kurashiki</strain>
    </source>
</reference>
<name>RS3_BUCAK</name>